<name>TM223_MOUSE</name>
<reference key="1">
    <citation type="journal article" date="2005" name="Science">
        <title>The transcriptional landscape of the mammalian genome.</title>
        <authorList>
            <person name="Carninci P."/>
            <person name="Kasukawa T."/>
            <person name="Katayama S."/>
            <person name="Gough J."/>
            <person name="Frith M.C."/>
            <person name="Maeda N."/>
            <person name="Oyama R."/>
            <person name="Ravasi T."/>
            <person name="Lenhard B."/>
            <person name="Wells C."/>
            <person name="Kodzius R."/>
            <person name="Shimokawa K."/>
            <person name="Bajic V.B."/>
            <person name="Brenner S.E."/>
            <person name="Batalov S."/>
            <person name="Forrest A.R."/>
            <person name="Zavolan M."/>
            <person name="Davis M.J."/>
            <person name="Wilming L.G."/>
            <person name="Aidinis V."/>
            <person name="Allen J.E."/>
            <person name="Ambesi-Impiombato A."/>
            <person name="Apweiler R."/>
            <person name="Aturaliya R.N."/>
            <person name="Bailey T.L."/>
            <person name="Bansal M."/>
            <person name="Baxter L."/>
            <person name="Beisel K.W."/>
            <person name="Bersano T."/>
            <person name="Bono H."/>
            <person name="Chalk A.M."/>
            <person name="Chiu K.P."/>
            <person name="Choudhary V."/>
            <person name="Christoffels A."/>
            <person name="Clutterbuck D.R."/>
            <person name="Crowe M.L."/>
            <person name="Dalla E."/>
            <person name="Dalrymple B.P."/>
            <person name="de Bono B."/>
            <person name="Della Gatta G."/>
            <person name="di Bernardo D."/>
            <person name="Down T."/>
            <person name="Engstrom P."/>
            <person name="Fagiolini M."/>
            <person name="Faulkner G."/>
            <person name="Fletcher C.F."/>
            <person name="Fukushima T."/>
            <person name="Furuno M."/>
            <person name="Futaki S."/>
            <person name="Gariboldi M."/>
            <person name="Georgii-Hemming P."/>
            <person name="Gingeras T.R."/>
            <person name="Gojobori T."/>
            <person name="Green R.E."/>
            <person name="Gustincich S."/>
            <person name="Harbers M."/>
            <person name="Hayashi Y."/>
            <person name="Hensch T.K."/>
            <person name="Hirokawa N."/>
            <person name="Hill D."/>
            <person name="Huminiecki L."/>
            <person name="Iacono M."/>
            <person name="Ikeo K."/>
            <person name="Iwama A."/>
            <person name="Ishikawa T."/>
            <person name="Jakt M."/>
            <person name="Kanapin A."/>
            <person name="Katoh M."/>
            <person name="Kawasawa Y."/>
            <person name="Kelso J."/>
            <person name="Kitamura H."/>
            <person name="Kitano H."/>
            <person name="Kollias G."/>
            <person name="Krishnan S.P."/>
            <person name="Kruger A."/>
            <person name="Kummerfeld S.K."/>
            <person name="Kurochkin I.V."/>
            <person name="Lareau L.F."/>
            <person name="Lazarevic D."/>
            <person name="Lipovich L."/>
            <person name="Liu J."/>
            <person name="Liuni S."/>
            <person name="McWilliam S."/>
            <person name="Madan Babu M."/>
            <person name="Madera M."/>
            <person name="Marchionni L."/>
            <person name="Matsuda H."/>
            <person name="Matsuzawa S."/>
            <person name="Miki H."/>
            <person name="Mignone F."/>
            <person name="Miyake S."/>
            <person name="Morris K."/>
            <person name="Mottagui-Tabar S."/>
            <person name="Mulder N."/>
            <person name="Nakano N."/>
            <person name="Nakauchi H."/>
            <person name="Ng P."/>
            <person name="Nilsson R."/>
            <person name="Nishiguchi S."/>
            <person name="Nishikawa S."/>
            <person name="Nori F."/>
            <person name="Ohara O."/>
            <person name="Okazaki Y."/>
            <person name="Orlando V."/>
            <person name="Pang K.C."/>
            <person name="Pavan W.J."/>
            <person name="Pavesi G."/>
            <person name="Pesole G."/>
            <person name="Petrovsky N."/>
            <person name="Piazza S."/>
            <person name="Reed J."/>
            <person name="Reid J.F."/>
            <person name="Ring B.Z."/>
            <person name="Ringwald M."/>
            <person name="Rost B."/>
            <person name="Ruan Y."/>
            <person name="Salzberg S.L."/>
            <person name="Sandelin A."/>
            <person name="Schneider C."/>
            <person name="Schoenbach C."/>
            <person name="Sekiguchi K."/>
            <person name="Semple C.A."/>
            <person name="Seno S."/>
            <person name="Sessa L."/>
            <person name="Sheng Y."/>
            <person name="Shibata Y."/>
            <person name="Shimada H."/>
            <person name="Shimada K."/>
            <person name="Silva D."/>
            <person name="Sinclair B."/>
            <person name="Sperling S."/>
            <person name="Stupka E."/>
            <person name="Sugiura K."/>
            <person name="Sultana R."/>
            <person name="Takenaka Y."/>
            <person name="Taki K."/>
            <person name="Tammoja K."/>
            <person name="Tan S.L."/>
            <person name="Tang S."/>
            <person name="Taylor M.S."/>
            <person name="Tegner J."/>
            <person name="Teichmann S.A."/>
            <person name="Ueda H.R."/>
            <person name="van Nimwegen E."/>
            <person name="Verardo R."/>
            <person name="Wei C.L."/>
            <person name="Yagi K."/>
            <person name="Yamanishi H."/>
            <person name="Zabarovsky E."/>
            <person name="Zhu S."/>
            <person name="Zimmer A."/>
            <person name="Hide W."/>
            <person name="Bult C."/>
            <person name="Grimmond S.M."/>
            <person name="Teasdale R.D."/>
            <person name="Liu E.T."/>
            <person name="Brusic V."/>
            <person name="Quackenbush J."/>
            <person name="Wahlestedt C."/>
            <person name="Mattick J.S."/>
            <person name="Hume D.A."/>
            <person name="Kai C."/>
            <person name="Sasaki D."/>
            <person name="Tomaru Y."/>
            <person name="Fukuda S."/>
            <person name="Kanamori-Katayama M."/>
            <person name="Suzuki M."/>
            <person name="Aoki J."/>
            <person name="Arakawa T."/>
            <person name="Iida J."/>
            <person name="Imamura K."/>
            <person name="Itoh M."/>
            <person name="Kato T."/>
            <person name="Kawaji H."/>
            <person name="Kawagashira N."/>
            <person name="Kawashima T."/>
            <person name="Kojima M."/>
            <person name="Kondo S."/>
            <person name="Konno H."/>
            <person name="Nakano K."/>
            <person name="Ninomiya N."/>
            <person name="Nishio T."/>
            <person name="Okada M."/>
            <person name="Plessy C."/>
            <person name="Shibata K."/>
            <person name="Shiraki T."/>
            <person name="Suzuki S."/>
            <person name="Tagami M."/>
            <person name="Waki K."/>
            <person name="Watahiki A."/>
            <person name="Okamura-Oho Y."/>
            <person name="Suzuki H."/>
            <person name="Kawai J."/>
            <person name="Hayashizaki Y."/>
        </authorList>
    </citation>
    <scope>NUCLEOTIDE SEQUENCE [LARGE SCALE MRNA]</scope>
    <source>
        <strain>C57BL/6J</strain>
        <tissue>Embryo</tissue>
        <tissue>Kidney</tissue>
        <tissue>Small intestine</tissue>
    </source>
</reference>
<reference key="2">
    <citation type="journal article" date="2004" name="Genome Res.">
        <title>The status, quality, and expansion of the NIH full-length cDNA project: the Mammalian Gene Collection (MGC).</title>
        <authorList>
            <consortium name="The MGC Project Team"/>
        </authorList>
    </citation>
    <scope>NUCLEOTIDE SEQUENCE [LARGE SCALE MRNA]</scope>
    <source>
        <tissue>Kidney</tissue>
    </source>
</reference>
<comment type="function">
    <text evidence="1">Mitochondrial ribosome-associated protein involved in the first steps of cytochrome c oxidase complex (complex IV) biogenesis. Stimulates the translation of MT-CO1 mRNA and is a constituent of early MT-CO1 assembly intermediates.</text>
</comment>
<comment type="subunit">
    <text evidence="1">Associates with the mitochondrial ribosome.</text>
</comment>
<comment type="subcellular location">
    <subcellularLocation>
        <location evidence="1">Mitochondrion inner membrane</location>
        <topology evidence="2">Multi-pass membrane protein</topology>
    </subcellularLocation>
</comment>
<comment type="similarity">
    <text evidence="3">Belongs to the TMEM223 family.</text>
</comment>
<gene>
    <name evidence="4" type="primary">Tmem223</name>
</gene>
<accession>Q9CQE2</accession>
<organism>
    <name type="scientific">Mus musculus</name>
    <name type="common">Mouse</name>
    <dbReference type="NCBI Taxonomy" id="10090"/>
    <lineage>
        <taxon>Eukaryota</taxon>
        <taxon>Metazoa</taxon>
        <taxon>Chordata</taxon>
        <taxon>Craniata</taxon>
        <taxon>Vertebrata</taxon>
        <taxon>Euteleostomi</taxon>
        <taxon>Mammalia</taxon>
        <taxon>Eutheria</taxon>
        <taxon>Euarchontoglires</taxon>
        <taxon>Glires</taxon>
        <taxon>Rodentia</taxon>
        <taxon>Myomorpha</taxon>
        <taxon>Muroidea</taxon>
        <taxon>Muridae</taxon>
        <taxon>Murinae</taxon>
        <taxon>Mus</taxon>
        <taxon>Mus</taxon>
    </lineage>
</organism>
<proteinExistence type="evidence at transcript level"/>
<evidence type="ECO:0000250" key="1">
    <source>
        <dbReference type="UniProtKB" id="A0PJW6"/>
    </source>
</evidence>
<evidence type="ECO:0000255" key="2"/>
<evidence type="ECO:0000305" key="3"/>
<evidence type="ECO:0000312" key="4">
    <source>
        <dbReference type="MGI" id="MGI:1914086"/>
    </source>
</evidence>
<keyword id="KW-0472">Membrane</keyword>
<keyword id="KW-0496">Mitochondrion</keyword>
<keyword id="KW-0999">Mitochondrion inner membrane</keyword>
<keyword id="KW-1185">Reference proteome</keyword>
<keyword id="KW-0812">Transmembrane</keyword>
<keyword id="KW-1133">Transmembrane helix</keyword>
<protein>
    <recommendedName>
        <fullName evidence="3">Transmembrane protein 223</fullName>
    </recommendedName>
</protein>
<dbReference type="EMBL" id="AK002249">
    <property type="protein sequence ID" value="BAB21964.1"/>
    <property type="molecule type" value="mRNA"/>
</dbReference>
<dbReference type="EMBL" id="AK003417">
    <property type="protein sequence ID" value="BAB22778.1"/>
    <property type="molecule type" value="mRNA"/>
</dbReference>
<dbReference type="EMBL" id="AK008282">
    <property type="protein sequence ID" value="BAB25573.1"/>
    <property type="molecule type" value="mRNA"/>
</dbReference>
<dbReference type="EMBL" id="AK008327">
    <property type="protein sequence ID" value="BAB25605.1"/>
    <property type="molecule type" value="mRNA"/>
</dbReference>
<dbReference type="EMBL" id="AK160470">
    <property type="protein sequence ID" value="BAE35807.1"/>
    <property type="molecule type" value="mRNA"/>
</dbReference>
<dbReference type="EMBL" id="BC066781">
    <property type="protein sequence ID" value="AAH66781.1"/>
    <property type="molecule type" value="mRNA"/>
</dbReference>
<dbReference type="CCDS" id="CCDS29544.1"/>
<dbReference type="RefSeq" id="NP_080067.1">
    <property type="nucleotide sequence ID" value="NM_025791.1"/>
</dbReference>
<dbReference type="FunCoup" id="Q9CQE2">
    <property type="interactions" value="867"/>
</dbReference>
<dbReference type="STRING" id="10090.ENSMUSP00000010248"/>
<dbReference type="GlyGen" id="Q9CQE2">
    <property type="glycosylation" value="2 sites, 1 N-linked glycan (1 site), 1 O-linked glycan (1 site)"/>
</dbReference>
<dbReference type="PhosphoSitePlus" id="Q9CQE2"/>
<dbReference type="PeptideAtlas" id="Q9CQE2"/>
<dbReference type="ProteomicsDB" id="259553"/>
<dbReference type="Antibodypedia" id="3050">
    <property type="antibodies" value="8 antibodies from 7 providers"/>
</dbReference>
<dbReference type="DNASU" id="66836"/>
<dbReference type="Ensembl" id="ENSMUST00000010248.4">
    <property type="protein sequence ID" value="ENSMUSP00000010248.4"/>
    <property type="gene ID" value="ENSMUSG00000117924.2"/>
</dbReference>
<dbReference type="GeneID" id="66836"/>
<dbReference type="KEGG" id="mmu:66836"/>
<dbReference type="UCSC" id="uc008gms.1">
    <property type="organism name" value="mouse"/>
</dbReference>
<dbReference type="AGR" id="MGI:1914086"/>
<dbReference type="CTD" id="79064"/>
<dbReference type="MGI" id="MGI:1914086">
    <property type="gene designation" value="Tmem223"/>
</dbReference>
<dbReference type="VEuPathDB" id="HostDB:ENSMUSG00000117924"/>
<dbReference type="GeneTree" id="ENSGT00390000012589"/>
<dbReference type="HOGENOM" id="CLU_099187_0_0_1"/>
<dbReference type="InParanoid" id="Q9CQE2"/>
<dbReference type="OMA" id="KQVSCMA"/>
<dbReference type="OrthoDB" id="5950063at2759"/>
<dbReference type="PhylomeDB" id="Q9CQE2"/>
<dbReference type="TreeFam" id="TF324862"/>
<dbReference type="BioGRID-ORCS" id="66836">
    <property type="hits" value="2 hits in 28 CRISPR screens"/>
</dbReference>
<dbReference type="ChiTaRS" id="Tmem223">
    <property type="organism name" value="mouse"/>
</dbReference>
<dbReference type="PRO" id="PR:Q9CQE2"/>
<dbReference type="Proteomes" id="UP000000589">
    <property type="component" value="Chromosome 19"/>
</dbReference>
<dbReference type="RNAct" id="Q9CQE2">
    <property type="molecule type" value="protein"/>
</dbReference>
<dbReference type="Bgee" id="ENSMUSG00000117924">
    <property type="expression patterns" value="Expressed in midbrain and 63 other cell types or tissues"/>
</dbReference>
<dbReference type="GO" id="GO:0005743">
    <property type="term" value="C:mitochondrial inner membrane"/>
    <property type="evidence" value="ECO:0000250"/>
    <property type="project" value="UniProtKB"/>
</dbReference>
<dbReference type="GO" id="GO:0005739">
    <property type="term" value="C:mitochondrion"/>
    <property type="evidence" value="ECO:0007005"/>
    <property type="project" value="MGI"/>
</dbReference>
<dbReference type="GO" id="GO:0097177">
    <property type="term" value="F:mitochondrial ribosome binding"/>
    <property type="evidence" value="ECO:0000250"/>
    <property type="project" value="UniProtKB"/>
</dbReference>
<dbReference type="GO" id="GO:0033617">
    <property type="term" value="P:mitochondrial cytochrome c oxidase assembly"/>
    <property type="evidence" value="ECO:0000250"/>
    <property type="project" value="UniProtKB"/>
</dbReference>
<dbReference type="InterPro" id="IPR026100">
    <property type="entry name" value="Tmem223"/>
</dbReference>
<dbReference type="InterPro" id="IPR045325">
    <property type="entry name" value="TMEM70/TMEM186/TMEM223"/>
</dbReference>
<dbReference type="PANTHER" id="PTHR14549">
    <property type="entry name" value="TRANSMEMBRANE PROTEIN 223"/>
    <property type="match status" value="1"/>
</dbReference>
<dbReference type="PANTHER" id="PTHR14549:SF2">
    <property type="entry name" value="TRANSMEMBRANE PROTEIN 223"/>
    <property type="match status" value="1"/>
</dbReference>
<dbReference type="Pfam" id="PF06979">
    <property type="entry name" value="TMEM70"/>
    <property type="match status" value="1"/>
</dbReference>
<sequence length="199" mass="21857">MVASVPLRNVSHLLSVLRSQNVPRYLQNGVPRDVLLFRHERGRFFAILGLFCAGQGIFWTSLAVAALSRPLSRVPAEAPNRSYQDLRSALWRYGLAVGCGTMGVLVLGAGLLYSLRSVRSVMLLAGGQQVTLTTYAPFGLGTCFTVPLNQISCMAHRGEVPAMLPLKVKGRRFYFLLDKAGHFPNTQLFDNTVGAYRSL</sequence>
<feature type="chain" id="PRO_0000321834" description="Transmembrane protein 223">
    <location>
        <begin position="1"/>
        <end position="199"/>
    </location>
</feature>
<feature type="topological domain" description="Mitochondrial matrix" evidence="1">
    <location>
        <begin position="1"/>
        <end position="43"/>
    </location>
</feature>
<feature type="transmembrane region" description="Helical" evidence="2">
    <location>
        <begin position="44"/>
        <end position="64"/>
    </location>
</feature>
<feature type="topological domain" description="Mitochondrial intermembrane" evidence="1">
    <location>
        <begin position="65"/>
        <end position="94"/>
    </location>
</feature>
<feature type="transmembrane region" description="Helical" evidence="2">
    <location>
        <begin position="95"/>
        <end position="115"/>
    </location>
</feature>
<feature type="topological domain" description="Mitochondrial matrix" evidence="1">
    <location>
        <begin position="116"/>
        <end position="199"/>
    </location>
</feature>